<dbReference type="EMBL" id="X60757">
    <property type="protein sequence ID" value="CAA43169.1"/>
    <property type="molecule type" value="mRNA"/>
</dbReference>
<dbReference type="PIR" id="S23730">
    <property type="entry name" value="S23730"/>
</dbReference>
<dbReference type="SMR" id="Q40170"/>
<dbReference type="FunCoup" id="Q40170">
    <property type="interactions" value="13"/>
</dbReference>
<dbReference type="STRING" id="4081.Q40170"/>
<dbReference type="InParanoid" id="Q40170"/>
<dbReference type="Proteomes" id="UP000004994">
    <property type="component" value="Unplaced"/>
</dbReference>
<dbReference type="ExpressionAtlas" id="Q40170">
    <property type="expression patterns" value="baseline and differential"/>
</dbReference>
<dbReference type="GO" id="GO:0005634">
    <property type="term" value="C:nucleus"/>
    <property type="evidence" value="ECO:0007669"/>
    <property type="project" value="UniProtKB-SubCell"/>
</dbReference>
<dbReference type="GO" id="GO:0000981">
    <property type="term" value="F:DNA-binding transcription factor activity, RNA polymerase II-specific"/>
    <property type="evidence" value="ECO:0000318"/>
    <property type="project" value="GO_Central"/>
</dbReference>
<dbReference type="GO" id="GO:0046983">
    <property type="term" value="F:protein dimerization activity"/>
    <property type="evidence" value="ECO:0007669"/>
    <property type="project" value="InterPro"/>
</dbReference>
<dbReference type="GO" id="GO:0000978">
    <property type="term" value="F:RNA polymerase II cis-regulatory region sequence-specific DNA binding"/>
    <property type="evidence" value="ECO:0000318"/>
    <property type="project" value="GO_Central"/>
</dbReference>
<dbReference type="GO" id="GO:0045944">
    <property type="term" value="P:positive regulation of transcription by RNA polymerase II"/>
    <property type="evidence" value="ECO:0007669"/>
    <property type="project" value="InterPro"/>
</dbReference>
<dbReference type="GO" id="GO:0006357">
    <property type="term" value="P:regulation of transcription by RNA polymerase II"/>
    <property type="evidence" value="ECO:0000318"/>
    <property type="project" value="GO_Central"/>
</dbReference>
<dbReference type="CDD" id="cd00265">
    <property type="entry name" value="MADS_MEF2_like"/>
    <property type="match status" value="1"/>
</dbReference>
<dbReference type="FunFam" id="3.40.1810.10:FF:000003">
    <property type="entry name" value="MADS-box transcription factor MADS-MC"/>
    <property type="match status" value="1"/>
</dbReference>
<dbReference type="Gene3D" id="3.40.1810.10">
    <property type="entry name" value="Transcription factor, MADS-box"/>
    <property type="match status" value="1"/>
</dbReference>
<dbReference type="InterPro" id="IPR050142">
    <property type="entry name" value="MADS-box/MEF2_TF"/>
</dbReference>
<dbReference type="InterPro" id="IPR033896">
    <property type="entry name" value="MEF2-like_N"/>
</dbReference>
<dbReference type="InterPro" id="IPR002487">
    <property type="entry name" value="TF_Kbox"/>
</dbReference>
<dbReference type="InterPro" id="IPR002100">
    <property type="entry name" value="TF_MADSbox"/>
</dbReference>
<dbReference type="InterPro" id="IPR036879">
    <property type="entry name" value="TF_MADSbox_sf"/>
</dbReference>
<dbReference type="PANTHER" id="PTHR48019">
    <property type="entry name" value="SERUM RESPONSE FACTOR HOMOLOG"/>
    <property type="match status" value="1"/>
</dbReference>
<dbReference type="Pfam" id="PF01486">
    <property type="entry name" value="K-box"/>
    <property type="match status" value="1"/>
</dbReference>
<dbReference type="Pfam" id="PF00319">
    <property type="entry name" value="SRF-TF"/>
    <property type="match status" value="1"/>
</dbReference>
<dbReference type="PRINTS" id="PR00404">
    <property type="entry name" value="MADSDOMAIN"/>
</dbReference>
<dbReference type="SMART" id="SM00432">
    <property type="entry name" value="MADS"/>
    <property type="match status" value="1"/>
</dbReference>
<dbReference type="SUPFAM" id="SSF55455">
    <property type="entry name" value="SRF-like"/>
    <property type="match status" value="1"/>
</dbReference>
<dbReference type="PROSITE" id="PS51297">
    <property type="entry name" value="K_BOX"/>
    <property type="match status" value="1"/>
</dbReference>
<dbReference type="PROSITE" id="PS00350">
    <property type="entry name" value="MADS_BOX_1"/>
    <property type="match status" value="1"/>
</dbReference>
<dbReference type="PROSITE" id="PS50066">
    <property type="entry name" value="MADS_BOX_2"/>
    <property type="match status" value="1"/>
</dbReference>
<keyword id="KW-0238">DNA-binding</keyword>
<keyword id="KW-0539">Nucleus</keyword>
<keyword id="KW-1185">Reference proteome</keyword>
<keyword id="KW-0804">Transcription</keyword>
<keyword id="KW-0805">Transcription regulation</keyword>
<gene>
    <name type="primary">TDR4</name>
</gene>
<evidence type="ECO:0000255" key="1">
    <source>
        <dbReference type="PROSITE-ProRule" id="PRU00251"/>
    </source>
</evidence>
<evidence type="ECO:0000255" key="2">
    <source>
        <dbReference type="PROSITE-ProRule" id="PRU00629"/>
    </source>
</evidence>
<accession>Q40170</accession>
<organism>
    <name type="scientific">Solanum lycopersicum</name>
    <name type="common">Tomato</name>
    <name type="synonym">Lycopersicon esculentum</name>
    <dbReference type="NCBI Taxonomy" id="4081"/>
    <lineage>
        <taxon>Eukaryota</taxon>
        <taxon>Viridiplantae</taxon>
        <taxon>Streptophyta</taxon>
        <taxon>Embryophyta</taxon>
        <taxon>Tracheophyta</taxon>
        <taxon>Spermatophyta</taxon>
        <taxon>Magnoliopsida</taxon>
        <taxon>eudicotyledons</taxon>
        <taxon>Gunneridae</taxon>
        <taxon>Pentapetalae</taxon>
        <taxon>asterids</taxon>
        <taxon>lamiids</taxon>
        <taxon>Solanales</taxon>
        <taxon>Solanaceae</taxon>
        <taxon>Solanoideae</taxon>
        <taxon>Solaneae</taxon>
        <taxon>Solanum</taxon>
        <taxon>Solanum subgen. Lycopersicon</taxon>
    </lineage>
</organism>
<sequence length="227" mass="26403">MGRGRVQLKRIENKINRQVTFSKRRSGLLKKAHEISVLCDAEVGLIVFSTKGKLFEYANDSCMERILERYERYSFAEKQLVPTDHTSPVSWTLEHRKLKARLEVLQRNQKHYVGEDLESLSMKELQNLEHQLDSALKHIRSRKNQLMHESISVLQKKDRALQEQNNQLSKKVKEREKSAQQISGINSSSLFAHTDFYLGTYQSTNVIDNGKWKEVVLHSSKVQLIIL</sequence>
<name>AGL8_SOLLC</name>
<proteinExistence type="evidence at transcript level"/>
<reference key="1">
    <citation type="journal article" date="1991" name="Plant J.">
        <title>The MADS box gene family in tomato: temporal expression during floral development, conserved secondary structures and homology with homeotic genes from Antirrhinum and Arabidopsis.</title>
        <authorList>
            <person name="Pnueli L."/>
            <person name="Abu-Abeid M."/>
            <person name="Zamir D."/>
            <person name="Nacken W."/>
            <person name="Schwarz-Sommer Z."/>
            <person name="Lifschitz E."/>
        </authorList>
    </citation>
    <scope>NUCLEOTIDE SEQUENCE [MRNA]</scope>
    <source>
        <strain>cv. VFNT Cherry</strain>
        <tissue>Flower</tissue>
    </source>
</reference>
<feature type="chain" id="PRO_0000199463" description="Agamous-like MADS-box protein AGL8 homolog">
    <location>
        <begin position="1"/>
        <end position="227"/>
    </location>
</feature>
<feature type="domain" description="MADS-box" evidence="1">
    <location>
        <begin position="3"/>
        <end position="57"/>
    </location>
</feature>
<feature type="domain" description="K-box" evidence="2">
    <location>
        <begin position="88"/>
        <end position="178"/>
    </location>
</feature>
<comment type="function">
    <text>Probable transcription factor.</text>
</comment>
<comment type="subcellular location">
    <subcellularLocation>
        <location evidence="1">Nucleus</location>
    </subcellularLocation>
</comment>
<comment type="tissue specificity">
    <text>Flower specific.</text>
</comment>
<protein>
    <recommendedName>
        <fullName>Agamous-like MADS-box protein AGL8 homolog</fullName>
    </recommendedName>
    <alternativeName>
        <fullName>TM4</fullName>
    </alternativeName>
</protein>